<feature type="chain" id="PRO_1000213671" description="Protein GrpE">
    <location>
        <begin position="1"/>
        <end position="195"/>
    </location>
</feature>
<feature type="region of interest" description="Disordered" evidence="2">
    <location>
        <begin position="1"/>
        <end position="40"/>
    </location>
</feature>
<feature type="compositionally biased region" description="Basic and acidic residues" evidence="2">
    <location>
        <begin position="1"/>
        <end position="20"/>
    </location>
</feature>
<accession>C6D9J8</accession>
<sequence length="195" mass="21675">MSSKEQKTPDEQVLDQKEAAKGQQADAAPETADVADPRDARIAELEAQLSELQQRERDNMLRVRAEADNVRRRAEMDVEKAHKFAVEKFASEMLPVIDNLERALDTADKANESLAAMIEGVELTLKSLLDAVRKFGIEVVGDVNVPFNPEVHQAMTMLPSADHQPNHVMMVMQKGYTLNGRLLRPAMVAVSKAQD</sequence>
<protein>
    <recommendedName>
        <fullName evidence="1">Protein GrpE</fullName>
    </recommendedName>
    <alternativeName>
        <fullName evidence="1">HSP-70 cofactor</fullName>
    </alternativeName>
</protein>
<gene>
    <name evidence="1" type="primary">grpE</name>
    <name type="ordered locus">PC1_0730</name>
</gene>
<comment type="function">
    <text evidence="1">Participates actively in the response to hyperosmotic and heat shock by preventing the aggregation of stress-denatured proteins, in association with DnaK and GrpE. It is the nucleotide exchange factor for DnaK and may function as a thermosensor. Unfolded proteins bind initially to DnaJ; upon interaction with the DnaJ-bound protein, DnaK hydrolyzes its bound ATP, resulting in the formation of a stable complex. GrpE releases ADP from DnaK; ATP binding to DnaK triggers the release of the substrate protein, thus completing the reaction cycle. Several rounds of ATP-dependent interactions between DnaJ, DnaK and GrpE are required for fully efficient folding.</text>
</comment>
<comment type="subunit">
    <text evidence="1">Homodimer.</text>
</comment>
<comment type="subcellular location">
    <subcellularLocation>
        <location evidence="1">Cytoplasm</location>
    </subcellularLocation>
</comment>
<comment type="similarity">
    <text evidence="1">Belongs to the GrpE family.</text>
</comment>
<keyword id="KW-0143">Chaperone</keyword>
<keyword id="KW-0963">Cytoplasm</keyword>
<keyword id="KW-0346">Stress response</keyword>
<organism>
    <name type="scientific">Pectobacterium carotovorum subsp. carotovorum (strain PC1)</name>
    <dbReference type="NCBI Taxonomy" id="561230"/>
    <lineage>
        <taxon>Bacteria</taxon>
        <taxon>Pseudomonadati</taxon>
        <taxon>Pseudomonadota</taxon>
        <taxon>Gammaproteobacteria</taxon>
        <taxon>Enterobacterales</taxon>
        <taxon>Pectobacteriaceae</taxon>
        <taxon>Pectobacterium</taxon>
    </lineage>
</organism>
<name>GRPE_PECCP</name>
<dbReference type="EMBL" id="CP001657">
    <property type="protein sequence ID" value="ACT11784.1"/>
    <property type="molecule type" value="Genomic_DNA"/>
</dbReference>
<dbReference type="RefSeq" id="WP_012773427.1">
    <property type="nucleotide sequence ID" value="NC_012917.1"/>
</dbReference>
<dbReference type="SMR" id="C6D9J8"/>
<dbReference type="STRING" id="561230.PC1_0730"/>
<dbReference type="GeneID" id="67795452"/>
<dbReference type="KEGG" id="pct:PC1_0730"/>
<dbReference type="eggNOG" id="COG0576">
    <property type="taxonomic scope" value="Bacteria"/>
</dbReference>
<dbReference type="HOGENOM" id="CLU_057217_6_0_6"/>
<dbReference type="OrthoDB" id="9789811at2"/>
<dbReference type="Proteomes" id="UP000002736">
    <property type="component" value="Chromosome"/>
</dbReference>
<dbReference type="GO" id="GO:0005829">
    <property type="term" value="C:cytosol"/>
    <property type="evidence" value="ECO:0007669"/>
    <property type="project" value="TreeGrafter"/>
</dbReference>
<dbReference type="GO" id="GO:0000774">
    <property type="term" value="F:adenyl-nucleotide exchange factor activity"/>
    <property type="evidence" value="ECO:0007669"/>
    <property type="project" value="InterPro"/>
</dbReference>
<dbReference type="GO" id="GO:0042803">
    <property type="term" value="F:protein homodimerization activity"/>
    <property type="evidence" value="ECO:0007669"/>
    <property type="project" value="InterPro"/>
</dbReference>
<dbReference type="GO" id="GO:0051087">
    <property type="term" value="F:protein-folding chaperone binding"/>
    <property type="evidence" value="ECO:0007669"/>
    <property type="project" value="InterPro"/>
</dbReference>
<dbReference type="GO" id="GO:0051082">
    <property type="term" value="F:unfolded protein binding"/>
    <property type="evidence" value="ECO:0007669"/>
    <property type="project" value="TreeGrafter"/>
</dbReference>
<dbReference type="GO" id="GO:0006457">
    <property type="term" value="P:protein folding"/>
    <property type="evidence" value="ECO:0007669"/>
    <property type="project" value="InterPro"/>
</dbReference>
<dbReference type="CDD" id="cd00446">
    <property type="entry name" value="GrpE"/>
    <property type="match status" value="1"/>
</dbReference>
<dbReference type="FunFam" id="2.30.22.10:FF:000001">
    <property type="entry name" value="Protein GrpE"/>
    <property type="match status" value="1"/>
</dbReference>
<dbReference type="FunFam" id="3.90.20.20:FF:000001">
    <property type="entry name" value="Protein GrpE"/>
    <property type="match status" value="1"/>
</dbReference>
<dbReference type="Gene3D" id="3.90.20.20">
    <property type="match status" value="1"/>
</dbReference>
<dbReference type="Gene3D" id="2.30.22.10">
    <property type="entry name" value="Head domain of nucleotide exchange factor GrpE"/>
    <property type="match status" value="1"/>
</dbReference>
<dbReference type="HAMAP" id="MF_01151">
    <property type="entry name" value="GrpE"/>
    <property type="match status" value="1"/>
</dbReference>
<dbReference type="InterPro" id="IPR000740">
    <property type="entry name" value="GrpE"/>
</dbReference>
<dbReference type="InterPro" id="IPR013805">
    <property type="entry name" value="GrpE_coiled_coil"/>
</dbReference>
<dbReference type="InterPro" id="IPR009012">
    <property type="entry name" value="GrpE_head"/>
</dbReference>
<dbReference type="NCBIfam" id="NF010737">
    <property type="entry name" value="PRK14139.1"/>
    <property type="match status" value="1"/>
</dbReference>
<dbReference type="NCBIfam" id="NF010738">
    <property type="entry name" value="PRK14140.1"/>
    <property type="match status" value="1"/>
</dbReference>
<dbReference type="NCBIfam" id="NF010748">
    <property type="entry name" value="PRK14150.1"/>
    <property type="match status" value="1"/>
</dbReference>
<dbReference type="PANTHER" id="PTHR21237">
    <property type="entry name" value="GRPE PROTEIN"/>
    <property type="match status" value="1"/>
</dbReference>
<dbReference type="PANTHER" id="PTHR21237:SF23">
    <property type="entry name" value="GRPE PROTEIN HOMOLOG, MITOCHONDRIAL"/>
    <property type="match status" value="1"/>
</dbReference>
<dbReference type="Pfam" id="PF01025">
    <property type="entry name" value="GrpE"/>
    <property type="match status" value="1"/>
</dbReference>
<dbReference type="PRINTS" id="PR00773">
    <property type="entry name" value="GRPEPROTEIN"/>
</dbReference>
<dbReference type="SUPFAM" id="SSF58014">
    <property type="entry name" value="Coiled-coil domain of nucleotide exchange factor GrpE"/>
    <property type="match status" value="1"/>
</dbReference>
<dbReference type="SUPFAM" id="SSF51064">
    <property type="entry name" value="Head domain of nucleotide exchange factor GrpE"/>
    <property type="match status" value="1"/>
</dbReference>
<dbReference type="PROSITE" id="PS01071">
    <property type="entry name" value="GRPE"/>
    <property type="match status" value="1"/>
</dbReference>
<evidence type="ECO:0000255" key="1">
    <source>
        <dbReference type="HAMAP-Rule" id="MF_01151"/>
    </source>
</evidence>
<evidence type="ECO:0000256" key="2">
    <source>
        <dbReference type="SAM" id="MobiDB-lite"/>
    </source>
</evidence>
<reference key="1">
    <citation type="submission" date="2009-07" db="EMBL/GenBank/DDBJ databases">
        <title>Complete sequence of Pectobacterium carotovorum subsp. carotovorum PC1.</title>
        <authorList>
            <consortium name="US DOE Joint Genome Institute"/>
            <person name="Lucas S."/>
            <person name="Copeland A."/>
            <person name="Lapidus A."/>
            <person name="Glavina del Rio T."/>
            <person name="Tice H."/>
            <person name="Bruce D."/>
            <person name="Goodwin L."/>
            <person name="Pitluck S."/>
            <person name="Munk A.C."/>
            <person name="Brettin T."/>
            <person name="Detter J.C."/>
            <person name="Han C."/>
            <person name="Tapia R."/>
            <person name="Larimer F."/>
            <person name="Land M."/>
            <person name="Hauser L."/>
            <person name="Kyrpides N."/>
            <person name="Mikhailova N."/>
            <person name="Balakrishnan V."/>
            <person name="Glasner J."/>
            <person name="Perna N.T."/>
        </authorList>
    </citation>
    <scope>NUCLEOTIDE SEQUENCE [LARGE SCALE GENOMIC DNA]</scope>
    <source>
        <strain>PC1</strain>
    </source>
</reference>
<proteinExistence type="inferred from homology"/>